<name>PAOC_ECO57</name>
<sequence>MKFDKPAGENPIDQLKVVGRPHDRIDGPLKTTGTARYAYEWHEESPNAAYGYIVGSAIAKGRLTALDTDAAQKAPGVLPVITASNAGALSKGDKNTARLLGGPTIEHYHQAIALVVAETFEQARAAASLVQAHYRRNKGAYSLADEKQAVSQPPEDTPDKNVGDFDGAFSSAAVKIDATYTTPDQSHMAMEPHASMAVWDGNKLTLWTSNQMIDWCRTDLAKTLKVPVENVRIISPYIGGGFGGKLFLRSDALLAALAARAVKRPVKVMLPRPSIPNNTTHRPATLQHLRIGADQSGKITAISHESWSGNLPGGTPETAVQQSELLYAGANRHTGLRLATLDLPEGNAMRAPGEAPGLMALEIAIDELAEKAGIDPVEFRILNDTQIDPADPTRRFSRRQLIECLRTGADKFGWKQRNATPGQVRDGEWLVGHGVAAGFRNNLLEKSGARVHLEPNGTVTVETDMTDIGTGSYTILAQTAAEMLGVPLEQVAVHLGDSSFPVSAGSGGQWGANTSTSGVYAACVKLREMIASAVGFDPEQSQFADGKITNGTRSAILHEATAGGRLTAEESIEFGTLSKEYQQSTFAGHFVEVGVHSATGEVRVRRMLAVCAAGRILNPKTARSQVIGAMTMGMGAALMEELAVDDRLGYFVNHDMAGYEVPVHADIPKQEVIFLDDTDPISSPMKAKGVGELGLCGVSAAIANAVYNATGIRVRDYPITLDKLLDKLPDVV</sequence>
<gene>
    <name evidence="1" type="primary">paoC</name>
    <name type="synonym">yagR</name>
    <name type="ordered locus">Z0350</name>
    <name type="ordered locus">ECs0314</name>
</gene>
<reference key="1">
    <citation type="journal article" date="2001" name="Nature">
        <title>Genome sequence of enterohaemorrhagic Escherichia coli O157:H7.</title>
        <authorList>
            <person name="Perna N.T."/>
            <person name="Plunkett G. III"/>
            <person name="Burland V."/>
            <person name="Mau B."/>
            <person name="Glasner J.D."/>
            <person name="Rose D.J."/>
            <person name="Mayhew G.F."/>
            <person name="Evans P.S."/>
            <person name="Gregor J."/>
            <person name="Kirkpatrick H.A."/>
            <person name="Posfai G."/>
            <person name="Hackett J."/>
            <person name="Klink S."/>
            <person name="Boutin A."/>
            <person name="Shao Y."/>
            <person name="Miller L."/>
            <person name="Grotbeck E.J."/>
            <person name="Davis N.W."/>
            <person name="Lim A."/>
            <person name="Dimalanta E.T."/>
            <person name="Potamousis K."/>
            <person name="Apodaca J."/>
            <person name="Anantharaman T.S."/>
            <person name="Lin J."/>
            <person name="Yen G."/>
            <person name="Schwartz D.C."/>
            <person name="Welch R.A."/>
            <person name="Blattner F.R."/>
        </authorList>
    </citation>
    <scope>NUCLEOTIDE SEQUENCE [LARGE SCALE GENOMIC DNA]</scope>
    <source>
        <strain>O157:H7 / EDL933 / ATCC 700927 / EHEC</strain>
    </source>
</reference>
<reference key="2">
    <citation type="journal article" date="2001" name="DNA Res.">
        <title>Complete genome sequence of enterohemorrhagic Escherichia coli O157:H7 and genomic comparison with a laboratory strain K-12.</title>
        <authorList>
            <person name="Hayashi T."/>
            <person name="Makino K."/>
            <person name="Ohnishi M."/>
            <person name="Kurokawa K."/>
            <person name="Ishii K."/>
            <person name="Yokoyama K."/>
            <person name="Han C.-G."/>
            <person name="Ohtsubo E."/>
            <person name="Nakayama K."/>
            <person name="Murata T."/>
            <person name="Tanaka M."/>
            <person name="Tobe T."/>
            <person name="Iida T."/>
            <person name="Takami H."/>
            <person name="Honda T."/>
            <person name="Sasakawa C."/>
            <person name="Ogasawara N."/>
            <person name="Yasunaga T."/>
            <person name="Kuhara S."/>
            <person name="Shiba T."/>
            <person name="Hattori M."/>
            <person name="Shinagawa H."/>
        </authorList>
    </citation>
    <scope>NUCLEOTIDE SEQUENCE [LARGE SCALE GENOMIC DNA]</scope>
    <source>
        <strain>O157:H7 / Sakai / RIMD 0509952 / EHEC</strain>
    </source>
</reference>
<keyword id="KW-0479">Metal-binding</keyword>
<keyword id="KW-0500">Molybdenum</keyword>
<keyword id="KW-0560">Oxidoreductase</keyword>
<keyword id="KW-0574">Periplasm</keyword>
<keyword id="KW-1185">Reference proteome</keyword>
<accession>Q8X6J4</accession>
<organism>
    <name type="scientific">Escherichia coli O157:H7</name>
    <dbReference type="NCBI Taxonomy" id="83334"/>
    <lineage>
        <taxon>Bacteria</taxon>
        <taxon>Pseudomonadati</taxon>
        <taxon>Pseudomonadota</taxon>
        <taxon>Gammaproteobacteria</taxon>
        <taxon>Enterobacterales</taxon>
        <taxon>Enterobacteriaceae</taxon>
        <taxon>Escherichia</taxon>
    </lineage>
</organism>
<evidence type="ECO:0000250" key="1">
    <source>
        <dbReference type="UniProtKB" id="P77489"/>
    </source>
</evidence>
<evidence type="ECO:0000305" key="2"/>
<comment type="function">
    <text evidence="1">Oxidizes aldehydes to the corresponding carboxylic acids with a preference for aromatic aldehydes. It might play a role in the detoxification of aldehydes to avoid cell damage.</text>
</comment>
<comment type="catalytic activity">
    <reaction evidence="1">
        <text>an aldehyde + A + H2O = a carboxylate + AH2 + H(+)</text>
        <dbReference type="Rhea" id="RHEA:56856"/>
        <dbReference type="ChEBI" id="CHEBI:13193"/>
        <dbReference type="ChEBI" id="CHEBI:15377"/>
        <dbReference type="ChEBI" id="CHEBI:15378"/>
        <dbReference type="ChEBI" id="CHEBI:17478"/>
        <dbReference type="ChEBI" id="CHEBI:17499"/>
        <dbReference type="ChEBI" id="CHEBI:29067"/>
        <dbReference type="EC" id="1.2.99.6"/>
    </reaction>
</comment>
<comment type="cofactor">
    <cofactor evidence="1">
        <name>Mo-molybdopterin cytosine dinucleotide</name>
        <dbReference type="ChEBI" id="CHEBI:71308"/>
    </cofactor>
</comment>
<comment type="subunit">
    <text evidence="1">Heterotrimer composed of PaoA, PaoB and PaoC.</text>
</comment>
<comment type="subcellular location">
    <subcellularLocation>
        <location evidence="1">Periplasm</location>
    </subcellularLocation>
</comment>
<comment type="similarity">
    <text evidence="2">Belongs to the xanthine dehydrogenase family.</text>
</comment>
<feature type="chain" id="PRO_0000166091" description="Aldehyde oxidoreductase molybdenum-binding subunit PaoC">
    <location>
        <begin position="1"/>
        <end position="732"/>
    </location>
</feature>
<feature type="active site" description="Proton acceptor" evidence="1">
    <location>
        <position position="692"/>
    </location>
</feature>
<feature type="binding site" evidence="1">
    <location>
        <begin position="241"/>
        <end position="242"/>
    </location>
    <ligand>
        <name>Mo-molybdopterin cytosine dinucleotide</name>
        <dbReference type="ChEBI" id="CHEBI:71308"/>
    </ligand>
</feature>
<feature type="binding site" evidence="1">
    <location>
        <begin position="468"/>
        <end position="470"/>
    </location>
    <ligand>
        <name>Mo-molybdopterin cytosine dinucleotide</name>
        <dbReference type="ChEBI" id="CHEBI:71308"/>
    </ligand>
</feature>
<feature type="binding site" evidence="1">
    <location>
        <begin position="511"/>
        <end position="512"/>
    </location>
    <ligand>
        <name>Mo-molybdopterin cytosine dinucleotide</name>
        <dbReference type="ChEBI" id="CHEBI:71308"/>
    </ligand>
</feature>
<feature type="binding site" evidence="1">
    <location>
        <begin position="615"/>
        <end position="621"/>
    </location>
    <ligand>
        <name>Mo-molybdopterin cytosine dinucleotide</name>
        <dbReference type="ChEBI" id="CHEBI:71308"/>
    </ligand>
</feature>
<feature type="binding site" evidence="1">
    <location>
        <position position="625"/>
    </location>
    <ligand>
        <name>Mo-molybdopterin cytosine dinucleotide</name>
        <dbReference type="ChEBI" id="CHEBI:71308"/>
    </ligand>
</feature>
<feature type="binding site" evidence="1">
    <location>
        <begin position="688"/>
        <end position="691"/>
    </location>
    <ligand>
        <name>Mo-molybdopterin cytosine dinucleotide</name>
        <dbReference type="ChEBI" id="CHEBI:71308"/>
    </ligand>
</feature>
<dbReference type="EC" id="1.2.99.6" evidence="1"/>
<dbReference type="EMBL" id="AE005174">
    <property type="protein sequence ID" value="AAG54609.1"/>
    <property type="molecule type" value="Genomic_DNA"/>
</dbReference>
<dbReference type="EMBL" id="BA000007">
    <property type="protein sequence ID" value="BAB33737.1"/>
    <property type="molecule type" value="Genomic_DNA"/>
</dbReference>
<dbReference type="PIR" id="B90668">
    <property type="entry name" value="B90668"/>
</dbReference>
<dbReference type="PIR" id="E85518">
    <property type="entry name" value="E85518"/>
</dbReference>
<dbReference type="RefSeq" id="NP_308341.1">
    <property type="nucleotide sequence ID" value="NC_002695.1"/>
</dbReference>
<dbReference type="RefSeq" id="WP_000667043.1">
    <property type="nucleotide sequence ID" value="NZ_VOAI01000033.1"/>
</dbReference>
<dbReference type="SMR" id="Q8X6J4"/>
<dbReference type="STRING" id="155864.Z0350"/>
<dbReference type="GeneID" id="914413"/>
<dbReference type="KEGG" id="ece:Z0350"/>
<dbReference type="KEGG" id="ecs:ECs_0314"/>
<dbReference type="PATRIC" id="fig|386585.9.peg.408"/>
<dbReference type="eggNOG" id="COG1529">
    <property type="taxonomic scope" value="Bacteria"/>
</dbReference>
<dbReference type="HOGENOM" id="CLU_001681_2_2_6"/>
<dbReference type="OMA" id="PYAYERH"/>
<dbReference type="Proteomes" id="UP000000558">
    <property type="component" value="Chromosome"/>
</dbReference>
<dbReference type="Proteomes" id="UP000002519">
    <property type="component" value="Chromosome"/>
</dbReference>
<dbReference type="GO" id="GO:0042597">
    <property type="term" value="C:periplasmic space"/>
    <property type="evidence" value="ECO:0007669"/>
    <property type="project" value="UniProtKB-SubCell"/>
</dbReference>
<dbReference type="GO" id="GO:0047770">
    <property type="term" value="F:carboxylate reductase activity"/>
    <property type="evidence" value="ECO:0007669"/>
    <property type="project" value="UniProtKB-EC"/>
</dbReference>
<dbReference type="GO" id="GO:0005506">
    <property type="term" value="F:iron ion binding"/>
    <property type="evidence" value="ECO:0007669"/>
    <property type="project" value="InterPro"/>
</dbReference>
<dbReference type="FunFam" id="3.30.365.10:FF:000016">
    <property type="entry name" value="Xanthine dehydrogenase yagR molybdenum-binding subunit"/>
    <property type="match status" value="1"/>
</dbReference>
<dbReference type="Gene3D" id="3.90.1170.50">
    <property type="entry name" value="Aldehyde oxidase/xanthine dehydrogenase, a/b hammerhead"/>
    <property type="match status" value="1"/>
</dbReference>
<dbReference type="Gene3D" id="3.30.365.10">
    <property type="entry name" value="Aldehyde oxidase/xanthine dehydrogenase, molybdopterin binding domain"/>
    <property type="match status" value="4"/>
</dbReference>
<dbReference type="InterPro" id="IPR000674">
    <property type="entry name" value="Ald_Oxase/Xan_DH_a/b"/>
</dbReference>
<dbReference type="InterPro" id="IPR036856">
    <property type="entry name" value="Ald_Oxase/Xan_DH_a/b_sf"/>
</dbReference>
<dbReference type="InterPro" id="IPR016208">
    <property type="entry name" value="Ald_Oxase/xanthine_DH-like"/>
</dbReference>
<dbReference type="InterPro" id="IPR008274">
    <property type="entry name" value="AldOxase/xan_DH_MoCoBD1"/>
</dbReference>
<dbReference type="InterPro" id="IPR046867">
    <property type="entry name" value="AldOxase/xan_DH_MoCoBD2"/>
</dbReference>
<dbReference type="InterPro" id="IPR037165">
    <property type="entry name" value="AldOxase/xan_DH_Mopterin-bd_sf"/>
</dbReference>
<dbReference type="InterPro" id="IPR049648">
    <property type="entry name" value="PaoC-like"/>
</dbReference>
<dbReference type="NCBIfam" id="NF041671">
    <property type="entry name" value="peri_hyde_PaoC"/>
    <property type="match status" value="1"/>
</dbReference>
<dbReference type="PANTHER" id="PTHR11908:SF123">
    <property type="entry name" value="ALDEHYDE OXIDOREDUCTASE MOLYBDENUM-BINDING SUBUNIT PAOC"/>
    <property type="match status" value="1"/>
</dbReference>
<dbReference type="PANTHER" id="PTHR11908">
    <property type="entry name" value="XANTHINE DEHYDROGENASE"/>
    <property type="match status" value="1"/>
</dbReference>
<dbReference type="Pfam" id="PF01315">
    <property type="entry name" value="Ald_Xan_dh_C"/>
    <property type="match status" value="1"/>
</dbReference>
<dbReference type="Pfam" id="PF02738">
    <property type="entry name" value="MoCoBD_1"/>
    <property type="match status" value="1"/>
</dbReference>
<dbReference type="Pfam" id="PF20256">
    <property type="entry name" value="MoCoBD_2"/>
    <property type="match status" value="1"/>
</dbReference>
<dbReference type="SMART" id="SM01008">
    <property type="entry name" value="Ald_Xan_dh_C"/>
    <property type="match status" value="1"/>
</dbReference>
<dbReference type="SUPFAM" id="SSF54665">
    <property type="entry name" value="CO dehydrogenase molybdoprotein N-domain-like"/>
    <property type="match status" value="1"/>
</dbReference>
<dbReference type="SUPFAM" id="SSF56003">
    <property type="entry name" value="Molybdenum cofactor-binding domain"/>
    <property type="match status" value="1"/>
</dbReference>
<protein>
    <recommendedName>
        <fullName evidence="1">Aldehyde oxidoreductase molybdenum-binding subunit PaoC</fullName>
        <ecNumber evidence="1">1.2.99.6</ecNumber>
    </recommendedName>
</protein>
<proteinExistence type="inferred from homology"/>